<evidence type="ECO:0000255" key="1">
    <source>
        <dbReference type="PROSITE-ProRule" id="PRU00502"/>
    </source>
</evidence>
<evidence type="ECO:0000255" key="2">
    <source>
        <dbReference type="PROSITE-ProRule" id="PRU10092"/>
    </source>
</evidence>
<evidence type="ECO:0000255" key="3">
    <source>
        <dbReference type="PROSITE-ProRule" id="PRU10093"/>
    </source>
</evidence>
<evidence type="ECO:0000256" key="4">
    <source>
        <dbReference type="SAM" id="MobiDB-lite"/>
    </source>
</evidence>
<evidence type="ECO:0000269" key="5">
    <source>
    </source>
</evidence>
<evidence type="ECO:0000305" key="6"/>
<sequence>MRFAATVSEKQSEQSVEVTEEFAVTMTEKRSCVHFDKYVDLDKLLKIIKSYQQIKCGECNERVHVKRGSRWGASNRRDWYSSSDQNCARNAIWLCLECGYYVCGDVGLPTEAQSHVMGHNRLTRHRLVIQCKNPQLRWCFSCQSLLPFDNEENGEKKDLLLEVVKLIRERSPNTYSASFETEFSCSGSIYGGIEARDGYAVRGLVNLGNTCFFNSVMQNLLSLDQLREHFLKEDLSVSGPLVSSLKELFAESNSEASVFRNEINPRDLFFSVCSQAPQFRGYQQHDSHELLRCLLDGLSIEESSLRKKLGVSDSNDSSTYQKPTLIDSVFGGEISSTVSCLECGHFSKVYEPFMDLSLPVPSMKLPPKKQQILSQAKEVLKNGAVSKDSEVVSAKPASDHNSTVPLFPSDHKIQSRPETSDNETDLVLLSDVSDTAPSTEAKGVNQILVGSTETLMHDNDRTGKTVPDKEDVRATQSNEETSASGISAVIDEAQVCGCPDLEQSSSSANQGADEELALMVADSQVLYMPYKDHLFYDDYMVAEASSSFVSGDHEPKKDYFDFSSFLDEPEIREGPVFRPLSKSEVYEAGFKADCSDDKTVSAGKGEASSSFISSDHEQNIDYVDFSSFFDEPEISERPFFRPLSKSEVSEAGFKADCSDDKTVSAGKGEASSSFVSSDHEQNIDYVDFSSFFDEPEISERPFFRPLSKSEVSEAGFMAVSGNDKTVRAGKGETFSSFMSGDNERNIDYVEFTNRIFDDRGTSERPVFGPPSKAKVSEAGFVAVSSDSDPAVLDESDSPVSVDRCLAQFTKHEILSEDNAWHCENCSKNLKLQRLREKRRTKEGLSNRWVNENGASSAFDECRDSSLNQSCIDLENGYKAAPPITKLPNCKEEESAIDDGFVGEENTKQAPITSVTETPLLGGETISSQPASDNECENWEDLAVDSEEVIVKRDARKKVLINKAPPVLTIHLKRFSQDARGRVSKLSGHVDFQEFIDLSKYMDTRCSEEDEPVYRLAGLVEHLGAMSRGHYVSYIRGGHKERRDSDTKEPNSSIWYHASDSQVRPASLEEVLRSEAYILFYERI</sequence>
<gene>
    <name type="primary">UBP1</name>
    <name type="ordered locus">At2g32780</name>
    <name type="ORF">F24L7.8</name>
</gene>
<accession>Q9FPT5</accession>
<accession>O48839</accession>
<dbReference type="EC" id="3.4.19.12"/>
<dbReference type="EMBL" id="AC003974">
    <property type="protein sequence ID" value="AAC04485.1"/>
    <property type="molecule type" value="Genomic_DNA"/>
</dbReference>
<dbReference type="EMBL" id="CP002685">
    <property type="protein sequence ID" value="AEC08739.1"/>
    <property type="molecule type" value="Genomic_DNA"/>
</dbReference>
<dbReference type="EMBL" id="AF302658">
    <property type="protein sequence ID" value="AAG42749.1"/>
    <property type="molecule type" value="mRNA"/>
</dbReference>
<dbReference type="PIR" id="T00790">
    <property type="entry name" value="T00790"/>
</dbReference>
<dbReference type="RefSeq" id="NP_565753.1">
    <property type="nucleotide sequence ID" value="NM_128838.2"/>
</dbReference>
<dbReference type="BioGRID" id="3186">
    <property type="interactions" value="2"/>
</dbReference>
<dbReference type="FunCoup" id="Q9FPT5">
    <property type="interactions" value="2349"/>
</dbReference>
<dbReference type="STRING" id="3702.Q9FPT5"/>
<dbReference type="MEROPS" id="C19.091"/>
<dbReference type="iPTMnet" id="Q9FPT5"/>
<dbReference type="PaxDb" id="3702-AT2G32780.1"/>
<dbReference type="EnsemblPlants" id="AT2G32780.1">
    <property type="protein sequence ID" value="AT2G32780.1"/>
    <property type="gene ID" value="AT2G32780"/>
</dbReference>
<dbReference type="GeneID" id="817839"/>
<dbReference type="Gramene" id="AT2G32780.1">
    <property type="protein sequence ID" value="AT2G32780.1"/>
    <property type="gene ID" value="AT2G32780"/>
</dbReference>
<dbReference type="KEGG" id="ath:AT2G32780"/>
<dbReference type="Araport" id="AT2G32780"/>
<dbReference type="TAIR" id="AT2G32780">
    <property type="gene designation" value="UBP1"/>
</dbReference>
<dbReference type="eggNOG" id="KOG1873">
    <property type="taxonomic scope" value="Eukaryota"/>
</dbReference>
<dbReference type="HOGENOM" id="CLU_005952_1_0_1"/>
<dbReference type="InParanoid" id="Q9FPT5"/>
<dbReference type="OMA" id="NGIVEHM"/>
<dbReference type="PhylomeDB" id="Q9FPT5"/>
<dbReference type="PRO" id="PR:Q9FPT5"/>
<dbReference type="Proteomes" id="UP000006548">
    <property type="component" value="Chromosome 2"/>
</dbReference>
<dbReference type="ExpressionAtlas" id="Q9FPT5">
    <property type="expression patterns" value="baseline and differential"/>
</dbReference>
<dbReference type="GO" id="GO:0004843">
    <property type="term" value="F:cysteine-type deubiquitinase activity"/>
    <property type="evidence" value="ECO:0007669"/>
    <property type="project" value="UniProtKB-EC"/>
</dbReference>
<dbReference type="GO" id="GO:0008270">
    <property type="term" value="F:zinc ion binding"/>
    <property type="evidence" value="ECO:0007669"/>
    <property type="project" value="UniProtKB-KW"/>
</dbReference>
<dbReference type="GO" id="GO:0016579">
    <property type="term" value="P:protein deubiquitination"/>
    <property type="evidence" value="ECO:0007669"/>
    <property type="project" value="InterPro"/>
</dbReference>
<dbReference type="GO" id="GO:0006508">
    <property type="term" value="P:proteolysis"/>
    <property type="evidence" value="ECO:0007669"/>
    <property type="project" value="UniProtKB-KW"/>
</dbReference>
<dbReference type="CDD" id="cd02667">
    <property type="entry name" value="Peptidase_C19K"/>
    <property type="match status" value="1"/>
</dbReference>
<dbReference type="FunFam" id="3.30.40.10:FF:000900">
    <property type="entry name" value="Ubiquitinyl hydrolase 1"/>
    <property type="match status" value="1"/>
</dbReference>
<dbReference type="Gene3D" id="3.90.70.10">
    <property type="entry name" value="Cysteine proteinases"/>
    <property type="match status" value="2"/>
</dbReference>
<dbReference type="Gene3D" id="3.30.40.10">
    <property type="entry name" value="Zinc/RING finger domain, C3HC4 (zinc finger)"/>
    <property type="match status" value="1"/>
</dbReference>
<dbReference type="InterPro" id="IPR038765">
    <property type="entry name" value="Papain-like_cys_pep_sf"/>
</dbReference>
<dbReference type="InterPro" id="IPR050164">
    <property type="entry name" value="Peptidase_C19"/>
</dbReference>
<dbReference type="InterPro" id="IPR001394">
    <property type="entry name" value="Peptidase_C19_UCH"/>
</dbReference>
<dbReference type="InterPro" id="IPR018200">
    <property type="entry name" value="USP_CS"/>
</dbReference>
<dbReference type="InterPro" id="IPR028889">
    <property type="entry name" value="USP_dom"/>
</dbReference>
<dbReference type="InterPro" id="IPR013083">
    <property type="entry name" value="Znf_RING/FYVE/PHD"/>
</dbReference>
<dbReference type="InterPro" id="IPR001607">
    <property type="entry name" value="Znf_UBP"/>
</dbReference>
<dbReference type="PANTHER" id="PTHR24006:SF781">
    <property type="entry name" value="LD34905P"/>
    <property type="match status" value="1"/>
</dbReference>
<dbReference type="PANTHER" id="PTHR24006">
    <property type="entry name" value="UBIQUITIN CARBOXYL-TERMINAL HYDROLASE"/>
    <property type="match status" value="1"/>
</dbReference>
<dbReference type="Pfam" id="PF00443">
    <property type="entry name" value="UCH"/>
    <property type="match status" value="1"/>
</dbReference>
<dbReference type="Pfam" id="PF02148">
    <property type="entry name" value="zf-UBP"/>
    <property type="match status" value="1"/>
</dbReference>
<dbReference type="SMART" id="SM00290">
    <property type="entry name" value="ZnF_UBP"/>
    <property type="match status" value="1"/>
</dbReference>
<dbReference type="SUPFAM" id="SSF54001">
    <property type="entry name" value="Cysteine proteinases"/>
    <property type="match status" value="1"/>
</dbReference>
<dbReference type="SUPFAM" id="SSF57850">
    <property type="entry name" value="RING/U-box"/>
    <property type="match status" value="1"/>
</dbReference>
<dbReference type="PROSITE" id="PS00972">
    <property type="entry name" value="USP_1"/>
    <property type="match status" value="1"/>
</dbReference>
<dbReference type="PROSITE" id="PS00973">
    <property type="entry name" value="USP_2"/>
    <property type="match status" value="1"/>
</dbReference>
<dbReference type="PROSITE" id="PS50235">
    <property type="entry name" value="USP_3"/>
    <property type="match status" value="1"/>
</dbReference>
<dbReference type="PROSITE" id="PS50271">
    <property type="entry name" value="ZF_UBP"/>
    <property type="match status" value="1"/>
</dbReference>
<proteinExistence type="evidence at protein level"/>
<organism>
    <name type="scientific">Arabidopsis thaliana</name>
    <name type="common">Mouse-ear cress</name>
    <dbReference type="NCBI Taxonomy" id="3702"/>
    <lineage>
        <taxon>Eukaryota</taxon>
        <taxon>Viridiplantae</taxon>
        <taxon>Streptophyta</taxon>
        <taxon>Embryophyta</taxon>
        <taxon>Tracheophyta</taxon>
        <taxon>Spermatophyta</taxon>
        <taxon>Magnoliopsida</taxon>
        <taxon>eudicotyledons</taxon>
        <taxon>Gunneridae</taxon>
        <taxon>Pentapetalae</taxon>
        <taxon>rosids</taxon>
        <taxon>malvids</taxon>
        <taxon>Brassicales</taxon>
        <taxon>Brassicaceae</taxon>
        <taxon>Camelineae</taxon>
        <taxon>Arabidopsis</taxon>
    </lineage>
</organism>
<reference key="1">
    <citation type="journal article" date="1999" name="Nature">
        <title>Sequence and analysis of chromosome 2 of the plant Arabidopsis thaliana.</title>
        <authorList>
            <person name="Lin X."/>
            <person name="Kaul S."/>
            <person name="Rounsley S.D."/>
            <person name="Shea T.P."/>
            <person name="Benito M.-I."/>
            <person name="Town C.D."/>
            <person name="Fujii C.Y."/>
            <person name="Mason T.M."/>
            <person name="Bowman C.L."/>
            <person name="Barnstead M.E."/>
            <person name="Feldblyum T.V."/>
            <person name="Buell C.R."/>
            <person name="Ketchum K.A."/>
            <person name="Lee J.J."/>
            <person name="Ronning C.M."/>
            <person name="Koo H.L."/>
            <person name="Moffat K.S."/>
            <person name="Cronin L.A."/>
            <person name="Shen M."/>
            <person name="Pai G."/>
            <person name="Van Aken S."/>
            <person name="Umayam L."/>
            <person name="Tallon L.J."/>
            <person name="Gill J.E."/>
            <person name="Adams M.D."/>
            <person name="Carrera A.J."/>
            <person name="Creasy T.H."/>
            <person name="Goodman H.M."/>
            <person name="Somerville C.R."/>
            <person name="Copenhaver G.P."/>
            <person name="Preuss D."/>
            <person name="Nierman W.C."/>
            <person name="White O."/>
            <person name="Eisen J.A."/>
            <person name="Salzberg S.L."/>
            <person name="Fraser C.M."/>
            <person name="Venter J.C."/>
        </authorList>
    </citation>
    <scope>NUCLEOTIDE SEQUENCE [LARGE SCALE GENOMIC DNA]</scope>
    <source>
        <strain>cv. Columbia</strain>
    </source>
</reference>
<reference key="2">
    <citation type="journal article" date="2017" name="Plant J.">
        <title>Araport11: a complete reannotation of the Arabidopsis thaliana reference genome.</title>
        <authorList>
            <person name="Cheng C.Y."/>
            <person name="Krishnakumar V."/>
            <person name="Chan A.P."/>
            <person name="Thibaud-Nissen F."/>
            <person name="Schobel S."/>
            <person name="Town C.D."/>
        </authorList>
    </citation>
    <scope>GENOME REANNOTATION</scope>
    <source>
        <strain>cv. Columbia</strain>
    </source>
</reference>
<reference key="3">
    <citation type="journal article" date="2000" name="Plant Physiol.">
        <title>The ubiquitin-specific protease family from Arabidopsis. AtUBP1 and 2 are required for the resistance to the amino acid analog canavanine.</title>
        <authorList>
            <person name="Yan N."/>
            <person name="Doelling J.H."/>
            <person name="Falbel T.G."/>
            <person name="Durski A.M."/>
            <person name="Vierstra R.D."/>
        </authorList>
    </citation>
    <scope>NUCLEOTIDE SEQUENCE [MRNA] OF 872-1025</scope>
    <scope>GENE FAMILY ORGANIZATION</scope>
    <scope>NOMENCLATURE</scope>
    <scope>FUNCTION</scope>
    <scope>MUTAGENESIS OF CYS-211</scope>
    <source>
        <strain>cv. Columbia</strain>
    </source>
</reference>
<feature type="chain" id="PRO_0000080692" description="Ubiquitin carboxyl-terminal hydrolase 1">
    <location>
        <begin position="1"/>
        <end position="1083"/>
    </location>
</feature>
<feature type="domain" description="USP">
    <location>
        <begin position="202"/>
        <end position="1083"/>
    </location>
</feature>
<feature type="zinc finger region" description="UBP-type" evidence="1">
    <location>
        <begin position="30"/>
        <end position="165"/>
    </location>
</feature>
<feature type="region of interest" description="Disordered" evidence="4">
    <location>
        <begin position="387"/>
        <end position="424"/>
    </location>
</feature>
<feature type="region of interest" description="Disordered" evidence="4">
    <location>
        <begin position="450"/>
        <end position="486"/>
    </location>
</feature>
<feature type="compositionally biased region" description="Basic and acidic residues" evidence="4">
    <location>
        <begin position="409"/>
        <end position="419"/>
    </location>
</feature>
<feature type="compositionally biased region" description="Basic and acidic residues" evidence="4">
    <location>
        <begin position="455"/>
        <end position="473"/>
    </location>
</feature>
<feature type="compositionally biased region" description="Polar residues" evidence="4">
    <location>
        <begin position="474"/>
        <end position="485"/>
    </location>
</feature>
<feature type="active site" description="Nucleophile" evidence="2 3">
    <location>
        <position position="211"/>
    </location>
</feature>
<feature type="active site" description="Proton acceptor" evidence="2 3">
    <location>
        <position position="1029"/>
    </location>
</feature>
<feature type="binding site" evidence="1">
    <location>
        <position position="32"/>
    </location>
    <ligand>
        <name>Zn(2+)</name>
        <dbReference type="ChEBI" id="CHEBI:29105"/>
        <label>1</label>
    </ligand>
</feature>
<feature type="binding site" evidence="1">
    <location>
        <position position="34"/>
    </location>
    <ligand>
        <name>Zn(2+)</name>
        <dbReference type="ChEBI" id="CHEBI:29105"/>
        <label>1</label>
    </ligand>
</feature>
<feature type="binding site" evidence="1">
    <location>
        <position position="56"/>
    </location>
    <ligand>
        <name>Zn(2+)</name>
        <dbReference type="ChEBI" id="CHEBI:29105"/>
        <label>2</label>
    </ligand>
</feature>
<feature type="binding site" evidence="1">
    <location>
        <position position="59"/>
    </location>
    <ligand>
        <name>Zn(2+)</name>
        <dbReference type="ChEBI" id="CHEBI:29105"/>
        <label>2</label>
    </ligand>
</feature>
<feature type="binding site" evidence="1">
    <location>
        <position position="95"/>
    </location>
    <ligand>
        <name>Zn(2+)</name>
        <dbReference type="ChEBI" id="CHEBI:29105"/>
        <label>3</label>
    </ligand>
</feature>
<feature type="binding site" evidence="1">
    <location>
        <position position="98"/>
    </location>
    <ligand>
        <name>Zn(2+)</name>
        <dbReference type="ChEBI" id="CHEBI:29105"/>
        <label>3</label>
    </ligand>
</feature>
<feature type="binding site" evidence="1">
    <location>
        <position position="103"/>
    </location>
    <ligand>
        <name>Zn(2+)</name>
        <dbReference type="ChEBI" id="CHEBI:29105"/>
        <label>2</label>
    </ligand>
</feature>
<feature type="binding site" evidence="1">
    <location>
        <position position="115"/>
    </location>
    <ligand>
        <name>Zn(2+)</name>
        <dbReference type="ChEBI" id="CHEBI:29105"/>
        <label>2</label>
    </ligand>
</feature>
<feature type="binding site" evidence="1">
    <location>
        <position position="119"/>
    </location>
    <ligand>
        <name>Zn(2+)</name>
        <dbReference type="ChEBI" id="CHEBI:29105"/>
        <label>3</label>
    </ligand>
</feature>
<feature type="binding site" evidence="1">
    <location>
        <position position="125"/>
    </location>
    <ligand>
        <name>Zn(2+)</name>
        <dbReference type="ChEBI" id="CHEBI:29105"/>
        <label>3</label>
    </ligand>
</feature>
<feature type="binding site" evidence="1">
    <location>
        <position position="139"/>
    </location>
    <ligand>
        <name>Zn(2+)</name>
        <dbReference type="ChEBI" id="CHEBI:29105"/>
        <label>1</label>
    </ligand>
</feature>
<feature type="binding site" evidence="1">
    <location>
        <position position="142"/>
    </location>
    <ligand>
        <name>Zn(2+)</name>
        <dbReference type="ChEBI" id="CHEBI:29105"/>
        <label>1</label>
    </ligand>
</feature>
<feature type="mutagenesis site" description="Confers CAN sensitivity." evidence="5">
    <original>C</original>
    <variation>S</variation>
    <location>
        <position position="211"/>
    </location>
</feature>
<name>UBP1_ARATH</name>
<protein>
    <recommendedName>
        <fullName>Ubiquitin carboxyl-terminal hydrolase 1</fullName>
        <ecNumber>3.4.19.12</ecNumber>
    </recommendedName>
    <alternativeName>
        <fullName>Deubiquitinating enzyme 1</fullName>
        <shortName>AtUBP1</shortName>
    </alternativeName>
    <alternativeName>
        <fullName>Ubiquitin thioesterase 1</fullName>
    </alternativeName>
    <alternativeName>
        <fullName>Ubiquitin-specific-processing protease 1</fullName>
    </alternativeName>
</protein>
<comment type="function">
    <text evidence="5">Recognizes and hydrolyzes the peptide bond at the C-terminal Gly of ubiquitin. Involved in the processing of poly-ubiquitin precursors as well as that of ubiquitinated proteins. Is involved in resistance to the arginine analog canavanine (CAN).</text>
</comment>
<comment type="catalytic activity">
    <reaction>
        <text>Thiol-dependent hydrolysis of ester, thioester, amide, peptide and isopeptide bonds formed by the C-terminal Gly of ubiquitin (a 76-residue protein attached to proteins as an intracellular targeting signal).</text>
        <dbReference type="EC" id="3.4.19.12"/>
    </reaction>
</comment>
<comment type="similarity">
    <text evidence="6">Belongs to the peptidase C19 family.</text>
</comment>
<keyword id="KW-0378">Hydrolase</keyword>
<keyword id="KW-0479">Metal-binding</keyword>
<keyword id="KW-0645">Protease</keyword>
<keyword id="KW-1185">Reference proteome</keyword>
<keyword id="KW-0788">Thiol protease</keyword>
<keyword id="KW-0833">Ubl conjugation pathway</keyword>
<keyword id="KW-0862">Zinc</keyword>
<keyword id="KW-0863">Zinc-finger</keyword>